<protein>
    <recommendedName>
        <fullName evidence="1">Serine--tRNA ligase</fullName>
        <ecNumber evidence="1">6.1.1.11</ecNumber>
    </recommendedName>
    <alternativeName>
        <fullName evidence="1">Seryl-tRNA synthetase</fullName>
        <shortName evidence="1">SerRS</shortName>
    </alternativeName>
    <alternativeName>
        <fullName evidence="1">Seryl-tRNA(Ser/Sec) synthetase</fullName>
    </alternativeName>
</protein>
<proteinExistence type="inferred from homology"/>
<accession>Q9ZBX1</accession>
<sequence length="425" mass="46998">MIDLRLLREDPDRVRASQRARGEDVALVDSLLSADERRRSSGVRFDELRAEQKGLGKLIGKAAGDEKAELLKRAEQLKTDVKAADAERDAADAETQELLQRLGNLVHPDVPVGGEEDFVTLETHGTHRDFAAEGFEPRDHLELGQLLGAIDVERGAKVSGSRFYFLTGVGALLELALVNAAIAQATAAGFTPMLTPALVRPQSMAGTGFLGQAAQDVYHLDKDDLYLVGTSEVPLAAYHMDEILDGDRLPLRYAGFSPCFRREAGSHGKDTRGIFRVHQFDKVEMFSYVLPEDSQAEHQRLLEWEKQWLTSLELPFRVIDVASADLGSSAARKYDCEAWIPTQGKYRELTSTSDCTEFQSRRLSIRVREGKKVRPLATLNGTLCAVPRTIVAILENHQQADGSVRVPEVLRPYLGGREVLEPVAK</sequence>
<reference key="1">
    <citation type="journal article" date="2002" name="Nature">
        <title>Complete genome sequence of the model actinomycete Streptomyces coelicolor A3(2).</title>
        <authorList>
            <person name="Bentley S.D."/>
            <person name="Chater K.F."/>
            <person name="Cerdeno-Tarraga A.-M."/>
            <person name="Challis G.L."/>
            <person name="Thomson N.R."/>
            <person name="James K.D."/>
            <person name="Harris D.E."/>
            <person name="Quail M.A."/>
            <person name="Kieser H."/>
            <person name="Harper D."/>
            <person name="Bateman A."/>
            <person name="Brown S."/>
            <person name="Chandra G."/>
            <person name="Chen C.W."/>
            <person name="Collins M."/>
            <person name="Cronin A."/>
            <person name="Fraser A."/>
            <person name="Goble A."/>
            <person name="Hidalgo J."/>
            <person name="Hornsby T."/>
            <person name="Howarth S."/>
            <person name="Huang C.-H."/>
            <person name="Kieser T."/>
            <person name="Larke L."/>
            <person name="Murphy L.D."/>
            <person name="Oliver K."/>
            <person name="O'Neil S."/>
            <person name="Rabbinowitsch E."/>
            <person name="Rajandream M.A."/>
            <person name="Rutherford K.M."/>
            <person name="Rutter S."/>
            <person name="Seeger K."/>
            <person name="Saunders D."/>
            <person name="Sharp S."/>
            <person name="Squares R."/>
            <person name="Squares S."/>
            <person name="Taylor K."/>
            <person name="Warren T."/>
            <person name="Wietzorrek A."/>
            <person name="Woodward J.R."/>
            <person name="Barrell B.G."/>
            <person name="Parkhill J."/>
            <person name="Hopwood D.A."/>
        </authorList>
    </citation>
    <scope>NUCLEOTIDE SEQUENCE [LARGE SCALE GENOMIC DNA]</scope>
    <source>
        <strain>ATCC BAA-471 / A3(2) / M145</strain>
    </source>
</reference>
<feature type="chain" id="PRO_0000122131" description="Serine--tRNA ligase">
    <location>
        <begin position="1"/>
        <end position="425"/>
    </location>
</feature>
<feature type="binding site" evidence="1">
    <location>
        <begin position="230"/>
        <end position="232"/>
    </location>
    <ligand>
        <name>L-serine</name>
        <dbReference type="ChEBI" id="CHEBI:33384"/>
    </ligand>
</feature>
<feature type="binding site" evidence="1">
    <location>
        <begin position="261"/>
        <end position="263"/>
    </location>
    <ligand>
        <name>ATP</name>
        <dbReference type="ChEBI" id="CHEBI:30616"/>
    </ligand>
</feature>
<feature type="binding site" evidence="1">
    <location>
        <position position="277"/>
    </location>
    <ligand>
        <name>ATP</name>
        <dbReference type="ChEBI" id="CHEBI:30616"/>
    </ligand>
</feature>
<feature type="binding site" evidence="1">
    <location>
        <position position="284"/>
    </location>
    <ligand>
        <name>L-serine</name>
        <dbReference type="ChEBI" id="CHEBI:33384"/>
    </ligand>
</feature>
<feature type="binding site" evidence="1">
    <location>
        <begin position="348"/>
        <end position="351"/>
    </location>
    <ligand>
        <name>ATP</name>
        <dbReference type="ChEBI" id="CHEBI:30616"/>
    </ligand>
</feature>
<feature type="binding site" evidence="1">
    <location>
        <position position="382"/>
    </location>
    <ligand>
        <name>L-serine</name>
        <dbReference type="ChEBI" id="CHEBI:33384"/>
    </ligand>
</feature>
<comment type="function">
    <text evidence="1">Catalyzes the attachment of serine to tRNA(Ser). Is also able to aminoacylate tRNA(Sec) with serine, to form the misacylated tRNA L-seryl-tRNA(Sec), which will be further converted into selenocysteinyl-tRNA(Sec).</text>
</comment>
<comment type="catalytic activity">
    <reaction evidence="1">
        <text>tRNA(Ser) + L-serine + ATP = L-seryl-tRNA(Ser) + AMP + diphosphate + H(+)</text>
        <dbReference type="Rhea" id="RHEA:12292"/>
        <dbReference type="Rhea" id="RHEA-COMP:9669"/>
        <dbReference type="Rhea" id="RHEA-COMP:9703"/>
        <dbReference type="ChEBI" id="CHEBI:15378"/>
        <dbReference type="ChEBI" id="CHEBI:30616"/>
        <dbReference type="ChEBI" id="CHEBI:33019"/>
        <dbReference type="ChEBI" id="CHEBI:33384"/>
        <dbReference type="ChEBI" id="CHEBI:78442"/>
        <dbReference type="ChEBI" id="CHEBI:78533"/>
        <dbReference type="ChEBI" id="CHEBI:456215"/>
        <dbReference type="EC" id="6.1.1.11"/>
    </reaction>
</comment>
<comment type="catalytic activity">
    <reaction evidence="1">
        <text>tRNA(Sec) + L-serine + ATP = L-seryl-tRNA(Sec) + AMP + diphosphate + H(+)</text>
        <dbReference type="Rhea" id="RHEA:42580"/>
        <dbReference type="Rhea" id="RHEA-COMP:9742"/>
        <dbReference type="Rhea" id="RHEA-COMP:10128"/>
        <dbReference type="ChEBI" id="CHEBI:15378"/>
        <dbReference type="ChEBI" id="CHEBI:30616"/>
        <dbReference type="ChEBI" id="CHEBI:33019"/>
        <dbReference type="ChEBI" id="CHEBI:33384"/>
        <dbReference type="ChEBI" id="CHEBI:78442"/>
        <dbReference type="ChEBI" id="CHEBI:78533"/>
        <dbReference type="ChEBI" id="CHEBI:456215"/>
        <dbReference type="EC" id="6.1.1.11"/>
    </reaction>
</comment>
<comment type="pathway">
    <text evidence="1">Aminoacyl-tRNA biosynthesis; selenocysteinyl-tRNA(Sec) biosynthesis; L-seryl-tRNA(Sec) from L-serine and tRNA(Sec): step 1/1.</text>
</comment>
<comment type="subunit">
    <text evidence="1">Homodimer. The tRNA molecule binds across the dimer.</text>
</comment>
<comment type="subcellular location">
    <subcellularLocation>
        <location evidence="1">Cytoplasm</location>
    </subcellularLocation>
</comment>
<comment type="domain">
    <text evidence="1">Consists of two distinct domains, a catalytic core and a N-terminal extension that is involved in tRNA binding.</text>
</comment>
<comment type="similarity">
    <text evidence="1">Belongs to the class-II aminoacyl-tRNA synthetase family. Type-1 seryl-tRNA synthetase subfamily.</text>
</comment>
<keyword id="KW-0030">Aminoacyl-tRNA synthetase</keyword>
<keyword id="KW-0067">ATP-binding</keyword>
<keyword id="KW-0963">Cytoplasm</keyword>
<keyword id="KW-0436">Ligase</keyword>
<keyword id="KW-0547">Nucleotide-binding</keyword>
<keyword id="KW-0648">Protein biosynthesis</keyword>
<keyword id="KW-1185">Reference proteome</keyword>
<evidence type="ECO:0000255" key="1">
    <source>
        <dbReference type="HAMAP-Rule" id="MF_00176"/>
    </source>
</evidence>
<name>SYS_STRCO</name>
<gene>
    <name evidence="1" type="primary">serS</name>
    <name type="ordered locus">SCO3961</name>
    <name type="ORF">SCD78.28c</name>
</gene>
<organism>
    <name type="scientific">Streptomyces coelicolor (strain ATCC BAA-471 / A3(2) / M145)</name>
    <dbReference type="NCBI Taxonomy" id="100226"/>
    <lineage>
        <taxon>Bacteria</taxon>
        <taxon>Bacillati</taxon>
        <taxon>Actinomycetota</taxon>
        <taxon>Actinomycetes</taxon>
        <taxon>Kitasatosporales</taxon>
        <taxon>Streptomycetaceae</taxon>
        <taxon>Streptomyces</taxon>
        <taxon>Streptomyces albidoflavus group</taxon>
    </lineage>
</organism>
<dbReference type="EC" id="6.1.1.11" evidence="1"/>
<dbReference type="EMBL" id="AL939118">
    <property type="protein sequence ID" value="CAA22233.1"/>
    <property type="molecule type" value="Genomic_DNA"/>
</dbReference>
<dbReference type="PIR" id="T36067">
    <property type="entry name" value="T36067"/>
</dbReference>
<dbReference type="RefSeq" id="NP_628145.1">
    <property type="nucleotide sequence ID" value="NC_003888.3"/>
</dbReference>
<dbReference type="RefSeq" id="WP_003974982.1">
    <property type="nucleotide sequence ID" value="NZ_VNID01000003.1"/>
</dbReference>
<dbReference type="SMR" id="Q9ZBX1"/>
<dbReference type="FunCoup" id="Q9ZBX1">
    <property type="interactions" value="462"/>
</dbReference>
<dbReference type="STRING" id="100226.gene:17761588"/>
<dbReference type="PaxDb" id="100226-SCO3961"/>
<dbReference type="GeneID" id="91385092"/>
<dbReference type="KEGG" id="sco:SCO3961"/>
<dbReference type="PATRIC" id="fig|100226.15.peg.4033"/>
<dbReference type="eggNOG" id="COG0172">
    <property type="taxonomic scope" value="Bacteria"/>
</dbReference>
<dbReference type="HOGENOM" id="CLU_023797_0_1_11"/>
<dbReference type="InParanoid" id="Q9ZBX1"/>
<dbReference type="OrthoDB" id="9804647at2"/>
<dbReference type="PhylomeDB" id="Q9ZBX1"/>
<dbReference type="BRENDA" id="6.1.1.11">
    <property type="organism ID" value="5998"/>
</dbReference>
<dbReference type="UniPathway" id="UPA00906">
    <property type="reaction ID" value="UER00895"/>
</dbReference>
<dbReference type="Proteomes" id="UP000001973">
    <property type="component" value="Chromosome"/>
</dbReference>
<dbReference type="GO" id="GO:0005737">
    <property type="term" value="C:cytoplasm"/>
    <property type="evidence" value="ECO:0007669"/>
    <property type="project" value="UniProtKB-SubCell"/>
</dbReference>
<dbReference type="GO" id="GO:0005524">
    <property type="term" value="F:ATP binding"/>
    <property type="evidence" value="ECO:0007669"/>
    <property type="project" value="UniProtKB-UniRule"/>
</dbReference>
<dbReference type="GO" id="GO:0004828">
    <property type="term" value="F:serine-tRNA ligase activity"/>
    <property type="evidence" value="ECO:0000318"/>
    <property type="project" value="GO_Central"/>
</dbReference>
<dbReference type="GO" id="GO:0000049">
    <property type="term" value="F:tRNA binding"/>
    <property type="evidence" value="ECO:0000318"/>
    <property type="project" value="GO_Central"/>
</dbReference>
<dbReference type="GO" id="GO:0016260">
    <property type="term" value="P:selenocysteine biosynthetic process"/>
    <property type="evidence" value="ECO:0007669"/>
    <property type="project" value="UniProtKB-UniRule"/>
</dbReference>
<dbReference type="GO" id="GO:0006434">
    <property type="term" value="P:seryl-tRNA aminoacylation"/>
    <property type="evidence" value="ECO:0000318"/>
    <property type="project" value="GO_Central"/>
</dbReference>
<dbReference type="CDD" id="cd00770">
    <property type="entry name" value="SerRS_core"/>
    <property type="match status" value="1"/>
</dbReference>
<dbReference type="FunFam" id="1.10.287.40:FF:000004">
    <property type="entry name" value="Serine--tRNA ligase"/>
    <property type="match status" value="1"/>
</dbReference>
<dbReference type="FunFam" id="3.30.930.10:FF:000048">
    <property type="entry name" value="Serine--tRNA ligase"/>
    <property type="match status" value="1"/>
</dbReference>
<dbReference type="Gene3D" id="3.30.930.10">
    <property type="entry name" value="Bira Bifunctional Protein, Domain 2"/>
    <property type="match status" value="1"/>
</dbReference>
<dbReference type="Gene3D" id="1.10.287.40">
    <property type="entry name" value="Serine-tRNA synthetase, tRNA binding domain"/>
    <property type="match status" value="1"/>
</dbReference>
<dbReference type="HAMAP" id="MF_00176">
    <property type="entry name" value="Ser_tRNA_synth_type1"/>
    <property type="match status" value="1"/>
</dbReference>
<dbReference type="InterPro" id="IPR002314">
    <property type="entry name" value="aa-tRNA-synt_IIb"/>
</dbReference>
<dbReference type="InterPro" id="IPR006195">
    <property type="entry name" value="aa-tRNA-synth_II"/>
</dbReference>
<dbReference type="InterPro" id="IPR045864">
    <property type="entry name" value="aa-tRNA-synth_II/BPL/LPL"/>
</dbReference>
<dbReference type="InterPro" id="IPR002317">
    <property type="entry name" value="Ser-tRNA-ligase_type_1"/>
</dbReference>
<dbReference type="InterPro" id="IPR015866">
    <property type="entry name" value="Ser-tRNA-synth_1_N"/>
</dbReference>
<dbReference type="InterPro" id="IPR042103">
    <property type="entry name" value="SerRS_1_N_sf"/>
</dbReference>
<dbReference type="InterPro" id="IPR033729">
    <property type="entry name" value="SerRS_core"/>
</dbReference>
<dbReference type="InterPro" id="IPR010978">
    <property type="entry name" value="tRNA-bd_arm"/>
</dbReference>
<dbReference type="NCBIfam" id="TIGR00414">
    <property type="entry name" value="serS"/>
    <property type="match status" value="1"/>
</dbReference>
<dbReference type="PANTHER" id="PTHR11778">
    <property type="entry name" value="SERYL-TRNA SYNTHETASE"/>
    <property type="match status" value="1"/>
</dbReference>
<dbReference type="Pfam" id="PF02403">
    <property type="entry name" value="Seryl_tRNA_N"/>
    <property type="match status" value="1"/>
</dbReference>
<dbReference type="Pfam" id="PF00587">
    <property type="entry name" value="tRNA-synt_2b"/>
    <property type="match status" value="1"/>
</dbReference>
<dbReference type="PIRSF" id="PIRSF001529">
    <property type="entry name" value="Ser-tRNA-synth_IIa"/>
    <property type="match status" value="1"/>
</dbReference>
<dbReference type="PRINTS" id="PR00981">
    <property type="entry name" value="TRNASYNTHSER"/>
</dbReference>
<dbReference type="SUPFAM" id="SSF55681">
    <property type="entry name" value="Class II aaRS and biotin synthetases"/>
    <property type="match status" value="1"/>
</dbReference>
<dbReference type="SUPFAM" id="SSF46589">
    <property type="entry name" value="tRNA-binding arm"/>
    <property type="match status" value="1"/>
</dbReference>
<dbReference type="PROSITE" id="PS50862">
    <property type="entry name" value="AA_TRNA_LIGASE_II"/>
    <property type="match status" value="1"/>
</dbReference>